<organism>
    <name type="scientific">Bombyx mori</name>
    <name type="common">Silk moth</name>
    <dbReference type="NCBI Taxonomy" id="7091"/>
    <lineage>
        <taxon>Eukaryota</taxon>
        <taxon>Metazoa</taxon>
        <taxon>Ecdysozoa</taxon>
        <taxon>Arthropoda</taxon>
        <taxon>Hexapoda</taxon>
        <taxon>Insecta</taxon>
        <taxon>Pterygota</taxon>
        <taxon>Neoptera</taxon>
        <taxon>Endopterygota</taxon>
        <taxon>Lepidoptera</taxon>
        <taxon>Glossata</taxon>
        <taxon>Ditrysia</taxon>
        <taxon>Bombycoidea</taxon>
        <taxon>Bombycidae</taxon>
        <taxon>Bombycinae</taxon>
        <taxon>Bombyx</taxon>
    </lineage>
</organism>
<accession>P08917</accession>
<name>CHB6_BOMMO</name>
<protein>
    <recommendedName>
        <fullName>Chorion class B protein M2410</fullName>
    </recommendedName>
</protein>
<dbReference type="EMBL" id="X12837">
    <property type="protein sequence ID" value="CAA31322.1"/>
    <property type="molecule type" value="mRNA"/>
</dbReference>
<dbReference type="PIR" id="S01420">
    <property type="entry name" value="S01420"/>
</dbReference>
<dbReference type="InParanoid" id="P08917"/>
<dbReference type="Proteomes" id="UP000005204">
    <property type="component" value="Unassembled WGS sequence"/>
</dbReference>
<dbReference type="GO" id="GO:0042600">
    <property type="term" value="C:egg chorion"/>
    <property type="evidence" value="ECO:0007669"/>
    <property type="project" value="InterPro"/>
</dbReference>
<dbReference type="GO" id="GO:0005213">
    <property type="term" value="F:structural constituent of egg chorion"/>
    <property type="evidence" value="ECO:0007669"/>
    <property type="project" value="InterPro"/>
</dbReference>
<dbReference type="GO" id="GO:0007304">
    <property type="term" value="P:chorion-containing eggshell formation"/>
    <property type="evidence" value="ECO:0007669"/>
    <property type="project" value="InterPro"/>
</dbReference>
<dbReference type="InterPro" id="IPR002635">
    <property type="entry name" value="Chorion"/>
</dbReference>
<dbReference type="Pfam" id="PF01723">
    <property type="entry name" value="Chorion_1"/>
    <property type="match status" value="1"/>
</dbReference>
<comment type="function">
    <text>This protein is one of many from the eggshell of the silk moth.</text>
</comment>
<comment type="similarity">
    <text evidence="1">Belongs to the chorion protein family.</text>
</comment>
<evidence type="ECO:0000305" key="1"/>
<reference key="1">
    <citation type="journal article" date="1983" name="EMBO J.">
        <title>Structural features of B family chorion sequences in the silkmoth Bombyx mori, and their evolutionary implications.</title>
        <authorList>
            <person name="Tsitilou S.G."/>
            <person name="Rodakis G.C."/>
            <person name="Alexopoulou M."/>
            <person name="Kafatos F.C."/>
            <person name="Ito K."/>
            <person name="Iatrou K."/>
        </authorList>
    </citation>
    <scope>NUCLEOTIDE SEQUENCE [MRNA]</scope>
    <source>
        <strain>703</strain>
    </source>
</reference>
<sequence length="110" mass="10243">YGGLGYGGLGYGGLGYGGLGGGCGRGFSGGGLPVATASAAPTGLGVASENRYEGTVGVSGNLPFLGTADVAGEFPTAGIGEIFYGCGNGDVGITREGGLGYGAGYGGGYG</sequence>
<keyword id="KW-1185">Reference proteome</keyword>
<keyword id="KW-0677">Repeat</keyword>
<feature type="chain" id="PRO_0000168182" description="Chorion class B protein M2410">
    <location>
        <begin position="1" status="less than"/>
        <end position="110" status="greater than"/>
    </location>
</feature>
<feature type="repeat" description="1">
    <location>
        <begin position="1" status="less than"/>
        <end position="4"/>
    </location>
</feature>
<feature type="repeat" description="2">
    <location>
        <begin position="5"/>
        <end position="9"/>
    </location>
</feature>
<feature type="repeat" description="3">
    <location>
        <begin position="10"/>
        <end position="14"/>
    </location>
</feature>
<feature type="repeat" description="4">
    <location>
        <begin position="15"/>
        <end position="19"/>
    </location>
</feature>
<feature type="region of interest" description="Left arm">
    <location>
        <begin position="1" status="less than"/>
        <end position="27"/>
    </location>
</feature>
<feature type="region of interest" description="4 X 5 AA tandem repeats of G-Y-G-G-L">
    <location>
        <begin position="1" status="less than"/>
        <end position="19"/>
    </location>
</feature>
<feature type="region of interest" description="Central domain">
    <location>
        <begin position="28"/>
        <end position="96"/>
    </location>
</feature>
<feature type="region of interest" description="Right arm (Gly-rich tandem repeats)">
    <location>
        <begin position="97"/>
        <end position="110" status="greater than"/>
    </location>
</feature>
<feature type="non-terminal residue">
    <location>
        <position position="1"/>
    </location>
</feature>
<feature type="non-terminal residue">
    <location>
        <position position="110"/>
    </location>
</feature>
<proteinExistence type="evidence at transcript level"/>